<name>PPK1_BURM1</name>
<evidence type="ECO:0000255" key="1">
    <source>
        <dbReference type="HAMAP-Rule" id="MF_00347"/>
    </source>
</evidence>
<keyword id="KW-0067">ATP-binding</keyword>
<keyword id="KW-0418">Kinase</keyword>
<keyword id="KW-0460">Magnesium</keyword>
<keyword id="KW-0479">Metal-binding</keyword>
<keyword id="KW-0547">Nucleotide-binding</keyword>
<keyword id="KW-0597">Phosphoprotein</keyword>
<keyword id="KW-1185">Reference proteome</keyword>
<keyword id="KW-0808">Transferase</keyword>
<comment type="function">
    <text evidence="1">Catalyzes the reversible transfer of the terminal phosphate of ATP to form a long-chain polyphosphate (polyP).</text>
</comment>
<comment type="catalytic activity">
    <reaction evidence="1">
        <text>[phosphate](n) + ATP = [phosphate](n+1) + ADP</text>
        <dbReference type="Rhea" id="RHEA:19573"/>
        <dbReference type="Rhea" id="RHEA-COMP:9859"/>
        <dbReference type="Rhea" id="RHEA-COMP:14280"/>
        <dbReference type="ChEBI" id="CHEBI:16838"/>
        <dbReference type="ChEBI" id="CHEBI:30616"/>
        <dbReference type="ChEBI" id="CHEBI:456216"/>
        <dbReference type="EC" id="2.7.4.1"/>
    </reaction>
</comment>
<comment type="cofactor">
    <cofactor evidence="1">
        <name>Mg(2+)</name>
        <dbReference type="ChEBI" id="CHEBI:18420"/>
    </cofactor>
</comment>
<comment type="PTM">
    <text evidence="1">An intermediate of this reaction is the autophosphorylated ppk in which a phosphate is covalently linked to a histidine residue through a N-P bond.</text>
</comment>
<comment type="similarity">
    <text evidence="1">Belongs to the polyphosphate kinase 1 (PPK1) family.</text>
</comment>
<feature type="chain" id="PRO_1000120500" description="Polyphosphate kinase">
    <location>
        <begin position="1"/>
        <end position="687"/>
    </location>
</feature>
<feature type="active site" description="Phosphohistidine intermediate" evidence="1">
    <location>
        <position position="435"/>
    </location>
</feature>
<feature type="binding site" evidence="1">
    <location>
        <position position="45"/>
    </location>
    <ligand>
        <name>ATP</name>
        <dbReference type="ChEBI" id="CHEBI:30616"/>
    </ligand>
</feature>
<feature type="binding site" evidence="1">
    <location>
        <position position="375"/>
    </location>
    <ligand>
        <name>Mg(2+)</name>
        <dbReference type="ChEBI" id="CHEBI:18420"/>
    </ligand>
</feature>
<feature type="binding site" evidence="1">
    <location>
        <position position="405"/>
    </location>
    <ligand>
        <name>Mg(2+)</name>
        <dbReference type="ChEBI" id="CHEBI:18420"/>
    </ligand>
</feature>
<feature type="binding site" evidence="1">
    <location>
        <position position="472"/>
    </location>
    <ligand>
        <name>ATP</name>
        <dbReference type="ChEBI" id="CHEBI:30616"/>
    </ligand>
</feature>
<feature type="binding site" evidence="1">
    <location>
        <position position="568"/>
    </location>
    <ligand>
        <name>ATP</name>
        <dbReference type="ChEBI" id="CHEBI:30616"/>
    </ligand>
</feature>
<feature type="binding site" evidence="1">
    <location>
        <position position="596"/>
    </location>
    <ligand>
        <name>ATP</name>
        <dbReference type="ChEBI" id="CHEBI:30616"/>
    </ligand>
</feature>
<sequence length="687" mass="77488">MSVRYPLLNRELGILGFNERVLAQAADPQVPLLERLRFICITSSNLDEFFEVRMAGLQEQIRDNPGAMTPDGMSLQHAYDLVVERAQRLVHRQYTMLHETVLPALEQEGIYFHNSDSWSDAQLEWARRYFLDELLPVLTPIGLDPAHPFPRVLNKSLNFVVELEGRDAFGRQAVMGIVQAPRALPRVVQMPQALSGFEHGFVLLSSFMQRFVGELFPQLVVKSCNQFRITRNSELFVDEDEITNLRVALQGELPARHLGNAVRLEVSADTPQHIVRRLLEESGLGEKDCYRVIGSVNLVRLMQIPDLVDRPDLKFTPFTASIPPAIANATTMFDAIDEGDILLHHPYESFQPVLELLQQAARDPSVVAIKQTIYRTGTDSPLMDALMEAARNGKEVTVVVELLARFDEETNINWASQLEAVGAHVVYGVVGHKCHAKMMLIVRRVMQGGKATLRRYVHLGTGNYHPRTARLYTDFGLMTADQKICEDVHHVFQQLTGIGGELALHELWQSPFTLHPRIIESIRTEIDNARAGKRARIVAKMNALLEPSVIAALYEASQAGVKVDLIVRGVCALKPGVPGLSENITVRSIVGRFLEHHRIYYFHADGAEHVYLSSADWMDRNLFRRVEVAFPIRERKLKRRVIAEGLSVCLGDNQSAWQMQSDGHYRRRRAGKTVRNAQLGLLAKFCS</sequence>
<protein>
    <recommendedName>
        <fullName evidence="1">Polyphosphate kinase</fullName>
        <ecNumber evidence="1">2.7.4.1</ecNumber>
    </recommendedName>
    <alternativeName>
        <fullName evidence="1">ATP-polyphosphate phosphotransferase</fullName>
    </alternativeName>
    <alternativeName>
        <fullName evidence="1">Polyphosphoric acid kinase</fullName>
    </alternativeName>
</protein>
<dbReference type="EC" id="2.7.4.1" evidence="1"/>
<dbReference type="EMBL" id="CP000868">
    <property type="protein sequence ID" value="ABX15698.1"/>
    <property type="molecule type" value="Genomic_DNA"/>
</dbReference>
<dbReference type="EMBL" id="AP009385">
    <property type="protein sequence ID" value="BAG43170.1"/>
    <property type="molecule type" value="Genomic_DNA"/>
</dbReference>
<dbReference type="RefSeq" id="WP_006417393.1">
    <property type="nucleotide sequence ID" value="NC_010084.1"/>
</dbReference>
<dbReference type="SMR" id="A9ACK7"/>
<dbReference type="STRING" id="395019.BMULJ_01230"/>
<dbReference type="GeneID" id="89569674"/>
<dbReference type="KEGG" id="bmj:BMULJ_01230"/>
<dbReference type="KEGG" id="bmu:Bmul_2013"/>
<dbReference type="eggNOG" id="COG0855">
    <property type="taxonomic scope" value="Bacteria"/>
</dbReference>
<dbReference type="HOGENOM" id="CLU_009678_5_0_4"/>
<dbReference type="Proteomes" id="UP000008815">
    <property type="component" value="Chromosome 1"/>
</dbReference>
<dbReference type="GO" id="GO:0009358">
    <property type="term" value="C:polyphosphate kinase complex"/>
    <property type="evidence" value="ECO:0007669"/>
    <property type="project" value="InterPro"/>
</dbReference>
<dbReference type="GO" id="GO:0005524">
    <property type="term" value="F:ATP binding"/>
    <property type="evidence" value="ECO:0007669"/>
    <property type="project" value="UniProtKB-KW"/>
</dbReference>
<dbReference type="GO" id="GO:0046872">
    <property type="term" value="F:metal ion binding"/>
    <property type="evidence" value="ECO:0007669"/>
    <property type="project" value="UniProtKB-KW"/>
</dbReference>
<dbReference type="GO" id="GO:0008976">
    <property type="term" value="F:polyphosphate kinase activity"/>
    <property type="evidence" value="ECO:0007669"/>
    <property type="project" value="UniProtKB-UniRule"/>
</dbReference>
<dbReference type="GO" id="GO:0006799">
    <property type="term" value="P:polyphosphate biosynthetic process"/>
    <property type="evidence" value="ECO:0007669"/>
    <property type="project" value="UniProtKB-UniRule"/>
</dbReference>
<dbReference type="CDD" id="cd09165">
    <property type="entry name" value="PLDc_PaPPK1_C1_like"/>
    <property type="match status" value="1"/>
</dbReference>
<dbReference type="CDD" id="cd09168">
    <property type="entry name" value="PLDc_PaPPK1_C2_like"/>
    <property type="match status" value="1"/>
</dbReference>
<dbReference type="Gene3D" id="3.30.870.10">
    <property type="entry name" value="Endonuclease Chain A"/>
    <property type="match status" value="2"/>
</dbReference>
<dbReference type="Gene3D" id="3.30.1840.10">
    <property type="entry name" value="Polyphosphate kinase middle domain"/>
    <property type="match status" value="1"/>
</dbReference>
<dbReference type="Gene3D" id="1.20.58.310">
    <property type="entry name" value="Polyphosphate kinase N-terminal domain"/>
    <property type="match status" value="1"/>
</dbReference>
<dbReference type="HAMAP" id="MF_00347">
    <property type="entry name" value="Polyphosphate_kinase"/>
    <property type="match status" value="1"/>
</dbReference>
<dbReference type="InterPro" id="IPR003414">
    <property type="entry name" value="PP_kinase"/>
</dbReference>
<dbReference type="InterPro" id="IPR041108">
    <property type="entry name" value="PP_kinase_C_1"/>
</dbReference>
<dbReference type="InterPro" id="IPR024953">
    <property type="entry name" value="PP_kinase_middle"/>
</dbReference>
<dbReference type="InterPro" id="IPR036830">
    <property type="entry name" value="PP_kinase_middle_dom_sf"/>
</dbReference>
<dbReference type="InterPro" id="IPR025200">
    <property type="entry name" value="PPK_C_dom2"/>
</dbReference>
<dbReference type="InterPro" id="IPR025198">
    <property type="entry name" value="PPK_N_dom"/>
</dbReference>
<dbReference type="InterPro" id="IPR036832">
    <property type="entry name" value="PPK_N_dom_sf"/>
</dbReference>
<dbReference type="NCBIfam" id="TIGR03705">
    <property type="entry name" value="poly_P_kin"/>
    <property type="match status" value="1"/>
</dbReference>
<dbReference type="NCBIfam" id="NF003917">
    <property type="entry name" value="PRK05443.1-1"/>
    <property type="match status" value="1"/>
</dbReference>
<dbReference type="NCBIfam" id="NF003918">
    <property type="entry name" value="PRK05443.1-2"/>
    <property type="match status" value="1"/>
</dbReference>
<dbReference type="NCBIfam" id="NF003921">
    <property type="entry name" value="PRK05443.2-2"/>
    <property type="match status" value="1"/>
</dbReference>
<dbReference type="PANTHER" id="PTHR30218">
    <property type="entry name" value="POLYPHOSPHATE KINASE"/>
    <property type="match status" value="1"/>
</dbReference>
<dbReference type="PANTHER" id="PTHR30218:SF0">
    <property type="entry name" value="POLYPHOSPHATE KINASE"/>
    <property type="match status" value="1"/>
</dbReference>
<dbReference type="Pfam" id="PF02503">
    <property type="entry name" value="PP_kinase"/>
    <property type="match status" value="1"/>
</dbReference>
<dbReference type="Pfam" id="PF13090">
    <property type="entry name" value="PP_kinase_C"/>
    <property type="match status" value="1"/>
</dbReference>
<dbReference type="Pfam" id="PF17941">
    <property type="entry name" value="PP_kinase_C_1"/>
    <property type="match status" value="1"/>
</dbReference>
<dbReference type="Pfam" id="PF13089">
    <property type="entry name" value="PP_kinase_N"/>
    <property type="match status" value="1"/>
</dbReference>
<dbReference type="PIRSF" id="PIRSF015589">
    <property type="entry name" value="PP_kinase"/>
    <property type="match status" value="1"/>
</dbReference>
<dbReference type="SUPFAM" id="SSF56024">
    <property type="entry name" value="Phospholipase D/nuclease"/>
    <property type="match status" value="2"/>
</dbReference>
<dbReference type="SUPFAM" id="SSF143724">
    <property type="entry name" value="PHP14-like"/>
    <property type="match status" value="1"/>
</dbReference>
<dbReference type="SUPFAM" id="SSF140356">
    <property type="entry name" value="PPK N-terminal domain-like"/>
    <property type="match status" value="1"/>
</dbReference>
<gene>
    <name evidence="1" type="primary">ppk</name>
    <name type="ordered locus">Bmul_2013</name>
    <name type="ordered locus">BMULJ_01230</name>
</gene>
<reference key="1">
    <citation type="submission" date="2007-10" db="EMBL/GenBank/DDBJ databases">
        <title>Complete sequence of chromosome 1 of Burkholderia multivorans ATCC 17616.</title>
        <authorList>
            <person name="Copeland A."/>
            <person name="Lucas S."/>
            <person name="Lapidus A."/>
            <person name="Barry K."/>
            <person name="Glavina del Rio T."/>
            <person name="Dalin E."/>
            <person name="Tice H."/>
            <person name="Pitluck S."/>
            <person name="Chain P."/>
            <person name="Malfatti S."/>
            <person name="Shin M."/>
            <person name="Vergez L."/>
            <person name="Schmutz J."/>
            <person name="Larimer F."/>
            <person name="Land M."/>
            <person name="Hauser L."/>
            <person name="Kyrpides N."/>
            <person name="Kim E."/>
            <person name="Tiedje J."/>
            <person name="Richardson P."/>
        </authorList>
    </citation>
    <scope>NUCLEOTIDE SEQUENCE [LARGE SCALE GENOMIC DNA]</scope>
    <source>
        <strain>ATCC 17616 / 249</strain>
    </source>
</reference>
<reference key="2">
    <citation type="submission" date="2007-04" db="EMBL/GenBank/DDBJ databases">
        <title>Complete genome sequence of Burkholderia multivorans ATCC 17616.</title>
        <authorList>
            <person name="Ohtsubo Y."/>
            <person name="Yamashita A."/>
            <person name="Kurokawa K."/>
            <person name="Takami H."/>
            <person name="Yuhara S."/>
            <person name="Nishiyama E."/>
            <person name="Endo R."/>
            <person name="Miyazaki R."/>
            <person name="Ono A."/>
            <person name="Yano K."/>
            <person name="Ito M."/>
            <person name="Sota M."/>
            <person name="Yuji N."/>
            <person name="Hattori M."/>
            <person name="Tsuda M."/>
        </authorList>
    </citation>
    <scope>NUCLEOTIDE SEQUENCE [LARGE SCALE GENOMIC DNA]</scope>
    <source>
        <strain>ATCC 17616 / 249</strain>
    </source>
</reference>
<proteinExistence type="inferred from homology"/>
<accession>A9ACK7</accession>
<organism>
    <name type="scientific">Burkholderia multivorans (strain ATCC 17616 / 249)</name>
    <dbReference type="NCBI Taxonomy" id="395019"/>
    <lineage>
        <taxon>Bacteria</taxon>
        <taxon>Pseudomonadati</taxon>
        <taxon>Pseudomonadota</taxon>
        <taxon>Betaproteobacteria</taxon>
        <taxon>Burkholderiales</taxon>
        <taxon>Burkholderiaceae</taxon>
        <taxon>Burkholderia</taxon>
        <taxon>Burkholderia cepacia complex</taxon>
    </lineage>
</organism>